<sequence length="224" mass="24830">MTARAWASWRSSALLLLLVPGYFPLSHPMTVAGPVGGSLSVQCRYEKEHRTLNKFWCRPPQILRCDKIVETKGSAGKRNGRVSIRDSPANLSFTVTLENLTEEDAGTYWCGVDTPWLRDFHDPIVEVEVSVFPAGTTTASSPQSSMGTSGPPTKLPVHTWPSVTRKDSPEPSPHPGSLFSNVRFLLLVLLELPLLLSMLGAVLWVNRPQRSSRSRQNWPKGENQ</sequence>
<accession>Q08708</accession>
<proteinExistence type="evidence at protein level"/>
<reference key="1">
    <citation type="journal article" date="1992" name="Eur. J. Immunol.">
        <title>Molecular cloning of a novel member of the immunoglobulin gene superfamily homologous to the polymeric immunoglobulin receptor.</title>
        <authorList>
            <person name="Jackson D.G."/>
            <person name="Hart D.N.J."/>
            <person name="Starling G."/>
            <person name="Bell J.I."/>
        </authorList>
    </citation>
    <scope>NUCLEOTIDE SEQUENCE [MRNA]</scope>
</reference>
<reference key="2">
    <citation type="journal article" date="2001" name="Tissue Antigens">
        <title>The gene encoding the immunoregulatory signaling molecule CMRF-35A localized to human chromosome 17 in close proximity to other members of the CMRF-35 family.</title>
        <authorList>
            <person name="Clark G.J."/>
            <person name="Cooper B."/>
            <person name="Fitzpatrick S."/>
            <person name="Green B.J."/>
            <person name="Hart D.N."/>
        </authorList>
    </citation>
    <scope>NUCLEOTIDE SEQUENCE [GENOMIC DNA]</scope>
</reference>
<reference key="3">
    <citation type="journal article" date="2004" name="Genome Res.">
        <title>The status, quality, and expansion of the NIH full-length cDNA project: the Mammalian Gene Collection (MGC).</title>
        <authorList>
            <consortium name="The MGC Project Team"/>
        </authorList>
    </citation>
    <scope>NUCLEOTIDE SEQUENCE [LARGE SCALE MRNA]</scope>
    <source>
        <tissue>Lung</tissue>
    </source>
</reference>
<reference key="4">
    <citation type="journal article" date="2003" name="Hum. Genet.">
        <title>Novel immunoglobulin superfamily gene cluster, mapping to a region of human chromosome 17q25, linked to psoriasis susceptibility.</title>
        <authorList>
            <person name="Speckman R.A."/>
            <person name="Wright Daw J.A."/>
            <person name="Helms C."/>
            <person name="Duan S."/>
            <person name="Cao L."/>
            <person name="Taillon-Miller P."/>
            <person name="Kwok P.Y."/>
            <person name="Menter A."/>
            <person name="Bowcock A.M."/>
        </authorList>
    </citation>
    <scope>IDENTIFICATION</scope>
</reference>
<feature type="signal peptide" evidence="1">
    <location>
        <begin position="1"/>
        <end position="20"/>
    </location>
</feature>
<feature type="chain" id="PRO_0000014681" description="CMRF35-like molecule 6">
    <location>
        <begin position="21"/>
        <end position="224"/>
    </location>
</feature>
<feature type="topological domain" description="Extracellular" evidence="1">
    <location>
        <begin position="21"/>
        <end position="183"/>
    </location>
</feature>
<feature type="transmembrane region" description="Helical" evidence="1">
    <location>
        <begin position="184"/>
        <end position="204"/>
    </location>
</feature>
<feature type="topological domain" description="Cytoplasmic" evidence="1">
    <location>
        <begin position="205"/>
        <end position="224"/>
    </location>
</feature>
<feature type="domain" description="Ig-like V-type">
    <location>
        <begin position="22"/>
        <end position="130"/>
    </location>
</feature>
<feature type="region of interest" description="Disordered" evidence="3">
    <location>
        <begin position="136"/>
        <end position="174"/>
    </location>
</feature>
<feature type="compositionally biased region" description="Polar residues" evidence="3">
    <location>
        <begin position="136"/>
        <end position="151"/>
    </location>
</feature>
<feature type="glycosylation site" description="N-linked (GlcNAc...) asparagine" evidence="1">
    <location>
        <position position="90"/>
    </location>
</feature>
<feature type="glycosylation site" description="N-linked (GlcNAc...) asparagine" evidence="1">
    <location>
        <position position="99"/>
    </location>
</feature>
<feature type="disulfide bond" evidence="2">
    <location>
        <begin position="43"/>
        <end position="110"/>
    </location>
</feature>
<feature type="disulfide bond" evidence="2">
    <location>
        <begin position="57"/>
        <end position="65"/>
    </location>
</feature>
<feature type="sequence variant" id="VAR_039133" description="In dbSNP:rs11870245.">
    <original>T</original>
    <variation>I</variation>
    <location>
        <position position="71"/>
    </location>
</feature>
<evidence type="ECO:0000255" key="1"/>
<evidence type="ECO:0000255" key="2">
    <source>
        <dbReference type="PROSITE-ProRule" id="PRU00114"/>
    </source>
</evidence>
<evidence type="ECO:0000256" key="3">
    <source>
        <dbReference type="SAM" id="MobiDB-lite"/>
    </source>
</evidence>
<evidence type="ECO:0000305" key="4"/>
<name>CLM6_HUMAN</name>
<organism>
    <name type="scientific">Homo sapiens</name>
    <name type="common">Human</name>
    <dbReference type="NCBI Taxonomy" id="9606"/>
    <lineage>
        <taxon>Eukaryota</taxon>
        <taxon>Metazoa</taxon>
        <taxon>Chordata</taxon>
        <taxon>Craniata</taxon>
        <taxon>Vertebrata</taxon>
        <taxon>Euteleostomi</taxon>
        <taxon>Mammalia</taxon>
        <taxon>Eutheria</taxon>
        <taxon>Euarchontoglires</taxon>
        <taxon>Primates</taxon>
        <taxon>Haplorrhini</taxon>
        <taxon>Catarrhini</taxon>
        <taxon>Hominidae</taxon>
        <taxon>Homo</taxon>
    </lineage>
</organism>
<keyword id="KW-1003">Cell membrane</keyword>
<keyword id="KW-1015">Disulfide bond</keyword>
<keyword id="KW-0325">Glycoprotein</keyword>
<keyword id="KW-0391">Immunity</keyword>
<keyword id="KW-0472">Membrane</keyword>
<keyword id="KW-1267">Proteomics identification</keyword>
<keyword id="KW-0675">Receptor</keyword>
<keyword id="KW-1185">Reference proteome</keyword>
<keyword id="KW-0732">Signal</keyword>
<keyword id="KW-0812">Transmembrane</keyword>
<keyword id="KW-1133">Transmembrane helix</keyword>
<gene>
    <name type="primary">CD300C</name>
    <name type="synonym">CMRF35</name>
    <name type="synonym">CMRF35A</name>
    <name type="synonym">CMRF35A1</name>
    <name type="synonym">IGSF16</name>
</gene>
<protein>
    <recommendedName>
        <fullName>CMRF35-like molecule 6</fullName>
        <shortName>CLM-6</shortName>
    </recommendedName>
    <alternativeName>
        <fullName>CD300 antigen-like family member C</fullName>
    </alternativeName>
    <alternativeName>
        <fullName>CMRF35-A1</fullName>
        <shortName>CMRF-35</shortName>
    </alternativeName>
    <alternativeName>
        <fullName>Immunoglobulin superfamily member 16</fullName>
        <shortName>IgSF16</shortName>
    </alternativeName>
    <cdAntigenName>CD300c</cdAntigenName>
</protein>
<comment type="interaction">
    <interactant intactId="EBI-3915344">
        <id>Q08708</id>
    </interactant>
    <interactant intactId="EBI-26499879">
        <id>A8K4G0</id>
        <label>CD300LB</label>
    </interactant>
    <organismsDiffer>false</organismsDiffer>
    <experiments>4</experiments>
</comment>
<comment type="interaction">
    <interactant intactId="EBI-3915344">
        <id>Q08708</id>
    </interactant>
    <interactant intactId="EBI-18938272">
        <id>Q96KR6</id>
        <label>FAM210B</label>
    </interactant>
    <organismsDiffer>false</organismsDiffer>
    <experiments>3</experiments>
</comment>
<comment type="interaction">
    <interactant intactId="EBI-3915344">
        <id>Q08708</id>
    </interactant>
    <interactant intactId="EBI-515289">
        <id>P30273</id>
        <label>FCER1G</label>
    </interactant>
    <organismsDiffer>false</organismsDiffer>
    <experiments>2</experiments>
</comment>
<comment type="interaction">
    <interactant intactId="EBI-3915344">
        <id>Q08708</id>
    </interactant>
    <interactant intactId="EBI-11955647">
        <id>Q8TDV0</id>
        <label>GPR151</label>
    </interactant>
    <organismsDiffer>false</organismsDiffer>
    <experiments>3</experiments>
</comment>
<comment type="interaction">
    <interactant intactId="EBI-3915344">
        <id>Q08708</id>
    </interactant>
    <interactant intactId="EBI-18076404">
        <id>O15529</id>
        <label>GPR42</label>
    </interactant>
    <organismsDiffer>false</organismsDiffer>
    <experiments>3</experiments>
</comment>
<comment type="interaction">
    <interactant intactId="EBI-3915344">
        <id>Q08708</id>
    </interactant>
    <interactant intactId="EBI-750776">
        <id>O95214</id>
        <label>LEPROTL1</label>
    </interactant>
    <organismsDiffer>false</organismsDiffer>
    <experiments>3</experiments>
</comment>
<comment type="interaction">
    <interactant intactId="EBI-3915344">
        <id>Q08708</id>
    </interactant>
    <interactant intactId="EBI-17684533">
        <id>Q9NRX6</id>
        <label>TMEM167B</label>
    </interactant>
    <organismsDiffer>false</organismsDiffer>
    <experiments>3</experiments>
</comment>
<comment type="interaction">
    <interactant intactId="EBI-3915344">
        <id>Q08708</id>
    </interactant>
    <interactant intactId="EBI-13356252">
        <id>Q86WB7-2</id>
        <label>UNC93A</label>
    </interactant>
    <organismsDiffer>false</organismsDiffer>
    <experiments>3</experiments>
</comment>
<comment type="subcellular location">
    <subcellularLocation>
        <location evidence="4">Cell membrane</location>
        <topology evidence="4">Single-pass type I membrane protein</topology>
    </subcellularLocation>
</comment>
<comment type="tissue specificity">
    <text>Present on the surface of monocytes, neutrophils, a proportion of peripheral blood T- and B-lymphocytes and lymphocytic cell lines.</text>
</comment>
<comment type="similarity">
    <text evidence="4">Belongs to the CD300 family.</text>
</comment>
<dbReference type="EMBL" id="X66171">
    <property type="protein sequence ID" value="CAA46948.1"/>
    <property type="molecule type" value="mRNA"/>
</dbReference>
<dbReference type="EMBL" id="AF373866">
    <property type="protein sequence ID" value="AAK64272.1"/>
    <property type="molecule type" value="Genomic_DNA"/>
</dbReference>
<dbReference type="EMBL" id="AF373863">
    <property type="protein sequence ID" value="AAK64272.1"/>
    <property type="status" value="JOINED"/>
    <property type="molecule type" value="Genomic_DNA"/>
</dbReference>
<dbReference type="EMBL" id="AF373864">
    <property type="protein sequence ID" value="AAK64272.1"/>
    <property type="status" value="JOINED"/>
    <property type="molecule type" value="Genomic_DNA"/>
</dbReference>
<dbReference type="EMBL" id="AF373865">
    <property type="protein sequence ID" value="AAK64272.1"/>
    <property type="status" value="JOINED"/>
    <property type="molecule type" value="Genomic_DNA"/>
</dbReference>
<dbReference type="EMBL" id="BC022279">
    <property type="protein sequence ID" value="AAH22279.1"/>
    <property type="molecule type" value="mRNA"/>
</dbReference>
<dbReference type="CCDS" id="CCDS11701.1"/>
<dbReference type="PIR" id="I37243">
    <property type="entry name" value="I37243"/>
</dbReference>
<dbReference type="RefSeq" id="NP_006669.1">
    <property type="nucleotide sequence ID" value="NM_006678.5"/>
</dbReference>
<dbReference type="SMR" id="Q08708"/>
<dbReference type="BioGRID" id="116080">
    <property type="interactions" value="14"/>
</dbReference>
<dbReference type="FunCoup" id="Q08708">
    <property type="interactions" value="666"/>
</dbReference>
<dbReference type="IntAct" id="Q08708">
    <property type="interactions" value="21"/>
</dbReference>
<dbReference type="STRING" id="9606.ENSP00000329507"/>
<dbReference type="GlyCosmos" id="Q08708">
    <property type="glycosylation" value="2 sites, No reported glycans"/>
</dbReference>
<dbReference type="GlyGen" id="Q08708">
    <property type="glycosylation" value="5 sites, 1 O-linked glycan (3 sites)"/>
</dbReference>
<dbReference type="iPTMnet" id="Q08708"/>
<dbReference type="PhosphoSitePlus" id="Q08708"/>
<dbReference type="BioMuta" id="CD300C"/>
<dbReference type="DMDM" id="1705938"/>
<dbReference type="MassIVE" id="Q08708"/>
<dbReference type="PaxDb" id="9606-ENSP00000329507"/>
<dbReference type="PeptideAtlas" id="Q08708"/>
<dbReference type="Antibodypedia" id="3049">
    <property type="antibodies" value="304 antibodies from 30 providers"/>
</dbReference>
<dbReference type="DNASU" id="10871"/>
<dbReference type="Ensembl" id="ENST00000330793.2">
    <property type="protein sequence ID" value="ENSP00000329507.1"/>
    <property type="gene ID" value="ENSG00000167850.5"/>
</dbReference>
<dbReference type="Ensembl" id="ENST00000709210.1">
    <property type="protein sequence ID" value="ENSP00000517558.1"/>
    <property type="gene ID" value="ENSG00000291920.1"/>
</dbReference>
<dbReference type="GeneID" id="10871"/>
<dbReference type="KEGG" id="hsa:10871"/>
<dbReference type="MANE-Select" id="ENST00000330793.2">
    <property type="protein sequence ID" value="ENSP00000329507.1"/>
    <property type="RefSeq nucleotide sequence ID" value="NM_006678.5"/>
    <property type="RefSeq protein sequence ID" value="NP_006669.1"/>
</dbReference>
<dbReference type="UCSC" id="uc002jky.3">
    <property type="organism name" value="human"/>
</dbReference>
<dbReference type="AGR" id="HGNC:19320"/>
<dbReference type="CTD" id="10871"/>
<dbReference type="DisGeNET" id="10871"/>
<dbReference type="GeneCards" id="CD300C"/>
<dbReference type="HGNC" id="HGNC:19320">
    <property type="gene designation" value="CD300C"/>
</dbReference>
<dbReference type="HPA" id="ENSG00000167850">
    <property type="expression patterns" value="Tissue enhanced (bone marrow, lung, lymphoid tissue)"/>
</dbReference>
<dbReference type="MIM" id="606786">
    <property type="type" value="gene"/>
</dbReference>
<dbReference type="neXtProt" id="NX_Q08708"/>
<dbReference type="OpenTargets" id="ENSG00000167850"/>
<dbReference type="PharmGKB" id="PA142672150"/>
<dbReference type="VEuPathDB" id="HostDB:ENSG00000167850"/>
<dbReference type="eggNOG" id="ENOG502S8BD">
    <property type="taxonomic scope" value="Eukaryota"/>
</dbReference>
<dbReference type="GeneTree" id="ENSGT00940000159622"/>
<dbReference type="HOGENOM" id="CLU_051023_3_0_1"/>
<dbReference type="InParanoid" id="Q08708"/>
<dbReference type="OMA" id="LQCDKIV"/>
<dbReference type="OrthoDB" id="8959642at2759"/>
<dbReference type="PAN-GO" id="Q08708">
    <property type="GO annotations" value="2 GO annotations based on evolutionary models"/>
</dbReference>
<dbReference type="PhylomeDB" id="Q08708"/>
<dbReference type="TreeFam" id="TF334441"/>
<dbReference type="PathwayCommons" id="Q08708"/>
<dbReference type="Reactome" id="R-HSA-198933">
    <property type="pathway name" value="Immunoregulatory interactions between a Lymphoid and a non-Lymphoid cell"/>
</dbReference>
<dbReference type="SignaLink" id="Q08708"/>
<dbReference type="BioGRID-ORCS" id="10871">
    <property type="hits" value="14 hits in 1133 CRISPR screens"/>
</dbReference>
<dbReference type="GeneWiki" id="CD300C"/>
<dbReference type="GenomeRNAi" id="10871"/>
<dbReference type="Pharos" id="Q08708">
    <property type="development level" value="Tbio"/>
</dbReference>
<dbReference type="PRO" id="PR:Q08708"/>
<dbReference type="Proteomes" id="UP000005640">
    <property type="component" value="Chromosome 17"/>
</dbReference>
<dbReference type="RNAct" id="Q08708">
    <property type="molecule type" value="protein"/>
</dbReference>
<dbReference type="Bgee" id="ENSG00000167850">
    <property type="expression patterns" value="Expressed in monocyte and 112 other cell types or tissues"/>
</dbReference>
<dbReference type="GO" id="GO:0005886">
    <property type="term" value="C:plasma membrane"/>
    <property type="evidence" value="ECO:0000318"/>
    <property type="project" value="GO_Central"/>
</dbReference>
<dbReference type="GO" id="GO:0004888">
    <property type="term" value="F:transmembrane signaling receptor activity"/>
    <property type="evidence" value="ECO:0000318"/>
    <property type="project" value="GO_Central"/>
</dbReference>
<dbReference type="GO" id="GO:0006968">
    <property type="term" value="P:cellular defense response"/>
    <property type="evidence" value="ECO:0000304"/>
    <property type="project" value="ProtInc"/>
</dbReference>
<dbReference type="GO" id="GO:0002376">
    <property type="term" value="P:immune system process"/>
    <property type="evidence" value="ECO:0007669"/>
    <property type="project" value="UniProtKB-KW"/>
</dbReference>
<dbReference type="GO" id="GO:0045088">
    <property type="term" value="P:regulation of innate immune response"/>
    <property type="evidence" value="ECO:0000318"/>
    <property type="project" value="GO_Central"/>
</dbReference>
<dbReference type="GO" id="GO:0007165">
    <property type="term" value="P:signal transduction"/>
    <property type="evidence" value="ECO:0000318"/>
    <property type="project" value="GO_Central"/>
</dbReference>
<dbReference type="CDD" id="cd05716">
    <property type="entry name" value="IgV_pIgR_like"/>
    <property type="match status" value="1"/>
</dbReference>
<dbReference type="FunFam" id="2.60.40.10:FF:000370">
    <property type="entry name" value="CMRF35-like molecule 1"/>
    <property type="match status" value="1"/>
</dbReference>
<dbReference type="Gene3D" id="2.60.40.10">
    <property type="entry name" value="Immunoglobulins"/>
    <property type="match status" value="1"/>
</dbReference>
<dbReference type="InterPro" id="IPR050671">
    <property type="entry name" value="CD300_family_receptors"/>
</dbReference>
<dbReference type="InterPro" id="IPR007110">
    <property type="entry name" value="Ig-like_dom"/>
</dbReference>
<dbReference type="InterPro" id="IPR036179">
    <property type="entry name" value="Ig-like_dom_sf"/>
</dbReference>
<dbReference type="InterPro" id="IPR013783">
    <property type="entry name" value="Ig-like_fold"/>
</dbReference>
<dbReference type="InterPro" id="IPR003599">
    <property type="entry name" value="Ig_sub"/>
</dbReference>
<dbReference type="InterPro" id="IPR013106">
    <property type="entry name" value="Ig_V-set"/>
</dbReference>
<dbReference type="PANTHER" id="PTHR11860:SF107">
    <property type="entry name" value="CMRF35-LIKE MOLECULE 6"/>
    <property type="match status" value="1"/>
</dbReference>
<dbReference type="PANTHER" id="PTHR11860">
    <property type="entry name" value="POLYMERIC-IMMUNOGLOBULIN RECEPTOR"/>
    <property type="match status" value="1"/>
</dbReference>
<dbReference type="Pfam" id="PF07686">
    <property type="entry name" value="V-set"/>
    <property type="match status" value="1"/>
</dbReference>
<dbReference type="SMART" id="SM00409">
    <property type="entry name" value="IG"/>
    <property type="match status" value="1"/>
</dbReference>
<dbReference type="SUPFAM" id="SSF48726">
    <property type="entry name" value="Immunoglobulin"/>
    <property type="match status" value="1"/>
</dbReference>
<dbReference type="PROSITE" id="PS50835">
    <property type="entry name" value="IG_LIKE"/>
    <property type="match status" value="1"/>
</dbReference>